<reference key="1">
    <citation type="submission" date="2007-02" db="EMBL/GenBank/DDBJ databases">
        <title>Complete sequence of plasmid pRSPH01 of Rhodobacter sphaeroides ATCC 17029.</title>
        <authorList>
            <person name="Copeland A."/>
            <person name="Lucas S."/>
            <person name="Lapidus A."/>
            <person name="Barry K."/>
            <person name="Detter J.C."/>
            <person name="Glavina del Rio T."/>
            <person name="Hammon N."/>
            <person name="Israni S."/>
            <person name="Dalin E."/>
            <person name="Tice H."/>
            <person name="Pitluck S."/>
            <person name="Kiss H."/>
            <person name="Brettin T."/>
            <person name="Bruce D."/>
            <person name="Han C."/>
            <person name="Tapia R."/>
            <person name="Gilna P."/>
            <person name="Schmutz J."/>
            <person name="Larimer F."/>
            <person name="Land M."/>
            <person name="Hauser L."/>
            <person name="Kyrpides N."/>
            <person name="Mikhailova N."/>
            <person name="Richardson P."/>
            <person name="Mackenzie C."/>
            <person name="Choudhary M."/>
            <person name="Donohue T.J."/>
            <person name="Kaplan S."/>
        </authorList>
    </citation>
    <scope>NUCLEOTIDE SEQUENCE [LARGE SCALE GENOMIC DNA]</scope>
    <source>
        <strain>ATCC 17029 / ATH 2.4.9</strain>
    </source>
</reference>
<geneLocation type="plasmid">
    <name>pRSPH01</name>
</geneLocation>
<protein>
    <recommendedName>
        <fullName evidence="1">ATP synthase subunit c 2</fullName>
    </recommendedName>
    <alternativeName>
        <fullName evidence="1">ATP synthase F(0) sector subunit c 2</fullName>
    </alternativeName>
    <alternativeName>
        <fullName evidence="1">F-type ATPase subunit c 2</fullName>
        <shortName evidence="1">F-ATPase subunit c 2</shortName>
    </alternativeName>
    <alternativeName>
        <fullName evidence="1">Lipid-binding protein 2</fullName>
    </alternativeName>
</protein>
<dbReference type="EMBL" id="CP000579">
    <property type="protein sequence ID" value="ABN79179.1"/>
    <property type="molecule type" value="Genomic_DNA"/>
</dbReference>
<dbReference type="RefSeq" id="WP_002724764.1">
    <property type="nucleotide sequence ID" value="NC_009040.1"/>
</dbReference>
<dbReference type="SMR" id="A3PS63"/>
<dbReference type="KEGG" id="rsh:Rsph17029_4101"/>
<dbReference type="HOGENOM" id="CLU_148047_2_0_5"/>
<dbReference type="GO" id="GO:0005886">
    <property type="term" value="C:plasma membrane"/>
    <property type="evidence" value="ECO:0007669"/>
    <property type="project" value="UniProtKB-SubCell"/>
</dbReference>
<dbReference type="GO" id="GO:0045259">
    <property type="term" value="C:proton-transporting ATP synthase complex"/>
    <property type="evidence" value="ECO:0007669"/>
    <property type="project" value="UniProtKB-KW"/>
</dbReference>
<dbReference type="GO" id="GO:0033177">
    <property type="term" value="C:proton-transporting two-sector ATPase complex, proton-transporting domain"/>
    <property type="evidence" value="ECO:0007669"/>
    <property type="project" value="InterPro"/>
</dbReference>
<dbReference type="GO" id="GO:0008289">
    <property type="term" value="F:lipid binding"/>
    <property type="evidence" value="ECO:0007669"/>
    <property type="project" value="UniProtKB-KW"/>
</dbReference>
<dbReference type="GO" id="GO:0046933">
    <property type="term" value="F:proton-transporting ATP synthase activity, rotational mechanism"/>
    <property type="evidence" value="ECO:0007669"/>
    <property type="project" value="UniProtKB-UniRule"/>
</dbReference>
<dbReference type="CDD" id="cd18121">
    <property type="entry name" value="ATP-synt_Fo_c"/>
    <property type="match status" value="1"/>
</dbReference>
<dbReference type="FunFam" id="1.20.20.10:FF:000002">
    <property type="entry name" value="ATP synthase subunit c"/>
    <property type="match status" value="1"/>
</dbReference>
<dbReference type="Gene3D" id="1.20.20.10">
    <property type="entry name" value="F1F0 ATP synthase subunit C"/>
    <property type="match status" value="1"/>
</dbReference>
<dbReference type="HAMAP" id="MF_01396">
    <property type="entry name" value="ATP_synth_c_bact"/>
    <property type="match status" value="1"/>
</dbReference>
<dbReference type="InterPro" id="IPR005953">
    <property type="entry name" value="ATP_synth_csu_bac/chlpt"/>
</dbReference>
<dbReference type="InterPro" id="IPR000454">
    <property type="entry name" value="ATP_synth_F0_csu"/>
</dbReference>
<dbReference type="InterPro" id="IPR020537">
    <property type="entry name" value="ATP_synth_F0_csu_DDCD_BS"/>
</dbReference>
<dbReference type="InterPro" id="IPR038662">
    <property type="entry name" value="ATP_synth_F0_csu_sf"/>
</dbReference>
<dbReference type="InterPro" id="IPR002379">
    <property type="entry name" value="ATPase_proteolipid_c-like_dom"/>
</dbReference>
<dbReference type="InterPro" id="IPR035921">
    <property type="entry name" value="F/V-ATP_Csub_sf"/>
</dbReference>
<dbReference type="NCBIfam" id="TIGR01260">
    <property type="entry name" value="ATP_synt_c"/>
    <property type="match status" value="1"/>
</dbReference>
<dbReference type="NCBIfam" id="NF009998">
    <property type="entry name" value="PRK13468.1"/>
    <property type="match status" value="1"/>
</dbReference>
<dbReference type="PANTHER" id="PTHR10031">
    <property type="entry name" value="ATP SYNTHASE LIPID-BINDING PROTEIN, MITOCHONDRIAL"/>
    <property type="match status" value="1"/>
</dbReference>
<dbReference type="PANTHER" id="PTHR10031:SF0">
    <property type="entry name" value="ATPASE PROTEIN 9"/>
    <property type="match status" value="1"/>
</dbReference>
<dbReference type="Pfam" id="PF00137">
    <property type="entry name" value="ATP-synt_C"/>
    <property type="match status" value="1"/>
</dbReference>
<dbReference type="PRINTS" id="PR00124">
    <property type="entry name" value="ATPASEC"/>
</dbReference>
<dbReference type="SUPFAM" id="SSF81333">
    <property type="entry name" value="F1F0 ATP synthase subunit C"/>
    <property type="match status" value="1"/>
</dbReference>
<dbReference type="PROSITE" id="PS00605">
    <property type="entry name" value="ATPASE_C"/>
    <property type="match status" value="1"/>
</dbReference>
<sequence>MTPETVQIASILGAAFAVGIGSLGPALGEGRAVAAAMEAIARQPEAAGTLSRTLFVGLAMIETMAIYCLVIALLLLFANPFTG</sequence>
<feature type="chain" id="PRO_5000227984" description="ATP synthase subunit c 2">
    <location>
        <begin position="1"/>
        <end position="83"/>
    </location>
</feature>
<feature type="transmembrane region" description="Helical" evidence="1">
    <location>
        <begin position="8"/>
        <end position="28"/>
    </location>
</feature>
<feature type="transmembrane region" description="Helical" evidence="1">
    <location>
        <begin position="58"/>
        <end position="78"/>
    </location>
</feature>
<feature type="site" description="Reversibly protonated during proton transport" evidence="1">
    <location>
        <position position="62"/>
    </location>
</feature>
<name>ATPL2_CERS1</name>
<gene>
    <name evidence="1" type="primary">atpE2</name>
    <name type="ordered locus">Rsph17029_4101</name>
</gene>
<proteinExistence type="inferred from homology"/>
<comment type="function">
    <text evidence="1">F(1)F(0) ATP synthase produces ATP from ADP in the presence of a proton or sodium gradient. F-type ATPases consist of two structural domains, F(1) containing the extramembraneous catalytic core and F(0) containing the membrane proton channel, linked together by a central stalk and a peripheral stalk. During catalysis, ATP synthesis in the catalytic domain of F(1) is coupled via a rotary mechanism of the central stalk subunits to proton translocation.</text>
</comment>
<comment type="function">
    <text evidence="1">Key component of the F(0) channel; it plays a direct role in translocation across the membrane. A homomeric c-ring of between 10-14 subunits forms the central stalk rotor element with the F(1) delta and epsilon subunits.</text>
</comment>
<comment type="subunit">
    <text evidence="1">F-type ATPases have 2 components, F(1) - the catalytic core - and F(0) - the membrane proton channel. F(1) has five subunits: alpha(3), beta(3), gamma(1), delta(1), epsilon(1). F(0) has four main subunits: a(1), b(1), b'(1) and c(10-14). The alpha and beta chains form an alternating ring which encloses part of the gamma chain. F(1) is attached to F(0) by a central stalk formed by the gamma and epsilon chains, while a peripheral stalk is formed by the delta, b and b' chains.</text>
</comment>
<comment type="subcellular location">
    <subcellularLocation>
        <location evidence="1">Cell inner membrane</location>
        <topology evidence="1">Multi-pass membrane protein</topology>
    </subcellularLocation>
</comment>
<comment type="similarity">
    <text evidence="1">Belongs to the ATPase C chain family.</text>
</comment>
<evidence type="ECO:0000255" key="1">
    <source>
        <dbReference type="HAMAP-Rule" id="MF_01396"/>
    </source>
</evidence>
<organism>
    <name type="scientific">Cereibacter sphaeroides (strain ATCC 17029 / ATH 2.4.9)</name>
    <name type="common">Rhodobacter sphaeroides</name>
    <dbReference type="NCBI Taxonomy" id="349101"/>
    <lineage>
        <taxon>Bacteria</taxon>
        <taxon>Pseudomonadati</taxon>
        <taxon>Pseudomonadota</taxon>
        <taxon>Alphaproteobacteria</taxon>
        <taxon>Rhodobacterales</taxon>
        <taxon>Paracoccaceae</taxon>
        <taxon>Cereibacter</taxon>
    </lineage>
</organism>
<keyword id="KW-0066">ATP synthesis</keyword>
<keyword id="KW-0997">Cell inner membrane</keyword>
<keyword id="KW-1003">Cell membrane</keyword>
<keyword id="KW-0138">CF(0)</keyword>
<keyword id="KW-0375">Hydrogen ion transport</keyword>
<keyword id="KW-0406">Ion transport</keyword>
<keyword id="KW-0446">Lipid-binding</keyword>
<keyword id="KW-0472">Membrane</keyword>
<keyword id="KW-0614">Plasmid</keyword>
<keyword id="KW-0812">Transmembrane</keyword>
<keyword id="KW-1133">Transmembrane helix</keyword>
<keyword id="KW-0813">Transport</keyword>
<accession>A3PS63</accession>